<gene>
    <name evidence="1" type="primary">rpsR</name>
    <name evidence="1" type="synonym">rps18</name>
    <name type="ordered locus">UU552</name>
</gene>
<sequence>MAKVTNNRNRKPRKKVCILSAKGIEHVDYKDVELLQRFINNNNKIASRRVTGASARMQRRIANAIKRARFVGLLPYVKE</sequence>
<name>RS18_UREPA</name>
<reference key="1">
    <citation type="journal article" date="2000" name="Nature">
        <title>The complete sequence of the mucosal pathogen Ureaplasma urealyticum.</title>
        <authorList>
            <person name="Glass J.I."/>
            <person name="Lefkowitz E.J."/>
            <person name="Glass J.S."/>
            <person name="Heiner C.R."/>
            <person name="Chen E.Y."/>
            <person name="Cassell G.H."/>
        </authorList>
    </citation>
    <scope>NUCLEOTIDE SEQUENCE [LARGE SCALE GENOMIC DNA]</scope>
    <source>
        <strain>ATCC 700970</strain>
    </source>
</reference>
<dbReference type="EMBL" id="AF222894">
    <property type="protein sequence ID" value="AAF30965.1"/>
    <property type="molecule type" value="Genomic_DNA"/>
</dbReference>
<dbReference type="RefSeq" id="WP_006688517.1">
    <property type="nucleotide sequence ID" value="NC_002162.1"/>
</dbReference>
<dbReference type="SMR" id="Q9PPT8"/>
<dbReference type="STRING" id="273119.UU552"/>
<dbReference type="EnsemblBacteria" id="AAF30965">
    <property type="protein sequence ID" value="AAF30965"/>
    <property type="gene ID" value="UU552"/>
</dbReference>
<dbReference type="GeneID" id="29672529"/>
<dbReference type="KEGG" id="uur:UU552"/>
<dbReference type="eggNOG" id="COG0238">
    <property type="taxonomic scope" value="Bacteria"/>
</dbReference>
<dbReference type="HOGENOM" id="CLU_148710_2_2_14"/>
<dbReference type="OrthoDB" id="9812008at2"/>
<dbReference type="Proteomes" id="UP000000423">
    <property type="component" value="Chromosome"/>
</dbReference>
<dbReference type="GO" id="GO:0022627">
    <property type="term" value="C:cytosolic small ribosomal subunit"/>
    <property type="evidence" value="ECO:0007669"/>
    <property type="project" value="TreeGrafter"/>
</dbReference>
<dbReference type="GO" id="GO:0070181">
    <property type="term" value="F:small ribosomal subunit rRNA binding"/>
    <property type="evidence" value="ECO:0007669"/>
    <property type="project" value="TreeGrafter"/>
</dbReference>
<dbReference type="GO" id="GO:0003735">
    <property type="term" value="F:structural constituent of ribosome"/>
    <property type="evidence" value="ECO:0007669"/>
    <property type="project" value="InterPro"/>
</dbReference>
<dbReference type="GO" id="GO:0006412">
    <property type="term" value="P:translation"/>
    <property type="evidence" value="ECO:0007669"/>
    <property type="project" value="UniProtKB-UniRule"/>
</dbReference>
<dbReference type="Gene3D" id="4.10.640.10">
    <property type="entry name" value="Ribosomal protein S18"/>
    <property type="match status" value="1"/>
</dbReference>
<dbReference type="HAMAP" id="MF_00270">
    <property type="entry name" value="Ribosomal_bS18"/>
    <property type="match status" value="1"/>
</dbReference>
<dbReference type="InterPro" id="IPR001648">
    <property type="entry name" value="Ribosomal_bS18"/>
</dbReference>
<dbReference type="InterPro" id="IPR036870">
    <property type="entry name" value="Ribosomal_bS18_sf"/>
</dbReference>
<dbReference type="NCBIfam" id="TIGR00165">
    <property type="entry name" value="S18"/>
    <property type="match status" value="1"/>
</dbReference>
<dbReference type="PANTHER" id="PTHR13479">
    <property type="entry name" value="30S RIBOSOMAL PROTEIN S18"/>
    <property type="match status" value="1"/>
</dbReference>
<dbReference type="PANTHER" id="PTHR13479:SF40">
    <property type="entry name" value="SMALL RIBOSOMAL SUBUNIT PROTEIN BS18M"/>
    <property type="match status" value="1"/>
</dbReference>
<dbReference type="Pfam" id="PF01084">
    <property type="entry name" value="Ribosomal_S18"/>
    <property type="match status" value="1"/>
</dbReference>
<dbReference type="PRINTS" id="PR00974">
    <property type="entry name" value="RIBOSOMALS18"/>
</dbReference>
<dbReference type="SUPFAM" id="SSF46911">
    <property type="entry name" value="Ribosomal protein S18"/>
    <property type="match status" value="1"/>
</dbReference>
<organism>
    <name type="scientific">Ureaplasma parvum serovar 3 (strain ATCC 700970)</name>
    <dbReference type="NCBI Taxonomy" id="273119"/>
    <lineage>
        <taxon>Bacteria</taxon>
        <taxon>Bacillati</taxon>
        <taxon>Mycoplasmatota</taxon>
        <taxon>Mycoplasmoidales</taxon>
        <taxon>Mycoplasmoidaceae</taxon>
        <taxon>Ureaplasma</taxon>
    </lineage>
</organism>
<comment type="function">
    <text evidence="1">Binds as a heterodimer with protein bS6 to the central domain of the 16S rRNA, where it helps stabilize the platform of the 30S subunit.</text>
</comment>
<comment type="subunit">
    <text evidence="1">Part of the 30S ribosomal subunit. Forms a tight heterodimer with protein bS6.</text>
</comment>
<comment type="similarity">
    <text evidence="1">Belongs to the bacterial ribosomal protein bS18 family.</text>
</comment>
<feature type="chain" id="PRO_0000111257" description="Small ribosomal subunit protein bS18">
    <location>
        <begin position="1"/>
        <end position="79"/>
    </location>
</feature>
<proteinExistence type="inferred from homology"/>
<evidence type="ECO:0000255" key="1">
    <source>
        <dbReference type="HAMAP-Rule" id="MF_00270"/>
    </source>
</evidence>
<evidence type="ECO:0000305" key="2"/>
<protein>
    <recommendedName>
        <fullName evidence="1">Small ribosomal subunit protein bS18</fullName>
    </recommendedName>
    <alternativeName>
        <fullName evidence="2">30S ribosomal protein S18</fullName>
    </alternativeName>
</protein>
<accession>Q9PPT8</accession>
<keyword id="KW-1185">Reference proteome</keyword>
<keyword id="KW-0687">Ribonucleoprotein</keyword>
<keyword id="KW-0689">Ribosomal protein</keyword>
<keyword id="KW-0694">RNA-binding</keyword>
<keyword id="KW-0699">rRNA-binding</keyword>